<keyword id="KW-1185">Reference proteome</keyword>
<accession>P30852</accession>
<accession>P76682</accession>
<accession>P76683</accession>
<accession>Q2M6V0</accession>
<accession>Q47136</accession>
<name>SMF_ECOLI</name>
<organism>
    <name type="scientific">Escherichia coli (strain K12)</name>
    <dbReference type="NCBI Taxonomy" id="83333"/>
    <lineage>
        <taxon>Bacteria</taxon>
        <taxon>Pseudomonadati</taxon>
        <taxon>Pseudomonadota</taxon>
        <taxon>Gammaproteobacteria</taxon>
        <taxon>Enterobacterales</taxon>
        <taxon>Enterobacteriaceae</taxon>
        <taxon>Escherichia</taxon>
    </lineage>
</organism>
<gene>
    <name type="primary">smf</name>
    <name type="ordered locus">b4473</name>
    <name type="ordered locus">JW5708</name>
</gene>
<proteinExistence type="inferred from homology"/>
<dbReference type="EMBL" id="X65946">
    <property type="protein sequence ID" value="CAA46763.1"/>
    <property type="molecule type" value="Genomic_DNA"/>
</dbReference>
<dbReference type="EMBL" id="X77091">
    <property type="protein sequence ID" value="CAA54366.1"/>
    <property type="molecule type" value="Genomic_DNA"/>
</dbReference>
<dbReference type="EMBL" id="X77800">
    <property type="protein sequence ID" value="CAA54827.1"/>
    <property type="molecule type" value="Genomic_DNA"/>
</dbReference>
<dbReference type="EMBL" id="U18997">
    <property type="protein sequence ID" value="AAA58083.1"/>
    <property type="status" value="ALT_FRAME"/>
    <property type="molecule type" value="Genomic_DNA"/>
</dbReference>
<dbReference type="EMBL" id="U18997">
    <property type="protein sequence ID" value="AAA58082.1"/>
    <property type="status" value="ALT_FRAME"/>
    <property type="molecule type" value="Genomic_DNA"/>
</dbReference>
<dbReference type="EMBL" id="U00096">
    <property type="protein sequence ID" value="AAT48176.1"/>
    <property type="molecule type" value="Genomic_DNA"/>
</dbReference>
<dbReference type="EMBL" id="AP009048">
    <property type="protein sequence ID" value="BAE78006.1"/>
    <property type="molecule type" value="Genomic_DNA"/>
</dbReference>
<dbReference type="RefSeq" id="YP_026211.1">
    <property type="nucleotide sequence ID" value="NC_000913.3"/>
</dbReference>
<dbReference type="SMR" id="P30852"/>
<dbReference type="BioGRID" id="4263397">
    <property type="interactions" value="19"/>
</dbReference>
<dbReference type="FunCoup" id="P30852">
    <property type="interactions" value="412"/>
</dbReference>
<dbReference type="STRING" id="511145.b4473"/>
<dbReference type="PaxDb" id="511145-b4473"/>
<dbReference type="EnsemblBacteria" id="AAT48176">
    <property type="protein sequence ID" value="AAT48176"/>
    <property type="gene ID" value="b4473"/>
</dbReference>
<dbReference type="GeneID" id="2847708"/>
<dbReference type="KEGG" id="ecj:JW5708"/>
<dbReference type="KEGG" id="eco:b4473"/>
<dbReference type="KEGG" id="ecoc:C3026_17865"/>
<dbReference type="PATRIC" id="fig|511145.12.peg.3379"/>
<dbReference type="EchoBASE" id="EB1561"/>
<dbReference type="eggNOG" id="COG0758">
    <property type="taxonomic scope" value="Bacteria"/>
</dbReference>
<dbReference type="HOGENOM" id="CLU_029601_1_1_6"/>
<dbReference type="InParanoid" id="P30852"/>
<dbReference type="OMA" id="QLPGMRY"/>
<dbReference type="OrthoDB" id="9785707at2"/>
<dbReference type="PhylomeDB" id="P30852"/>
<dbReference type="BioCyc" id="EcoCyc:EG11604-MONOMER"/>
<dbReference type="PRO" id="PR:P30852"/>
<dbReference type="Proteomes" id="UP000000625">
    <property type="component" value="Chromosome"/>
</dbReference>
<dbReference type="GO" id="GO:0009294">
    <property type="term" value="P:DNA-mediated transformation"/>
    <property type="evidence" value="ECO:0007669"/>
    <property type="project" value="InterPro"/>
</dbReference>
<dbReference type="Gene3D" id="3.40.50.450">
    <property type="match status" value="1"/>
</dbReference>
<dbReference type="Gene3D" id="1.10.10.10">
    <property type="entry name" value="Winged helix-like DNA-binding domain superfamily/Winged helix DNA-binding domain"/>
    <property type="match status" value="1"/>
</dbReference>
<dbReference type="InterPro" id="IPR003488">
    <property type="entry name" value="DprA"/>
</dbReference>
<dbReference type="InterPro" id="IPR041614">
    <property type="entry name" value="DprA_WH"/>
</dbReference>
<dbReference type="InterPro" id="IPR036388">
    <property type="entry name" value="WH-like_DNA-bd_sf"/>
</dbReference>
<dbReference type="NCBIfam" id="TIGR00732">
    <property type="entry name" value="dprA"/>
    <property type="match status" value="1"/>
</dbReference>
<dbReference type="NCBIfam" id="NF008007">
    <property type="entry name" value="PRK10736.1"/>
    <property type="match status" value="1"/>
</dbReference>
<dbReference type="PANTHER" id="PTHR43022">
    <property type="entry name" value="PROTEIN SMF"/>
    <property type="match status" value="1"/>
</dbReference>
<dbReference type="PANTHER" id="PTHR43022:SF1">
    <property type="entry name" value="PROTEIN SMF"/>
    <property type="match status" value="1"/>
</dbReference>
<dbReference type="Pfam" id="PF02481">
    <property type="entry name" value="DNA_processg_A"/>
    <property type="match status" value="1"/>
</dbReference>
<dbReference type="Pfam" id="PF17782">
    <property type="entry name" value="DprA_WH"/>
    <property type="match status" value="1"/>
</dbReference>
<dbReference type="Pfam" id="PF25317">
    <property type="entry name" value="SAM_SMF"/>
    <property type="match status" value="1"/>
</dbReference>
<dbReference type="SUPFAM" id="SSF102405">
    <property type="entry name" value="MCP/YpsA-like"/>
    <property type="match status" value="1"/>
</dbReference>
<comment type="function">
    <text evidence="1 2">Partially complements natural chromosomal DNA transformation defect of an H.influenzae dprA disruption mutant (PubMed:16978360). May help load RecA onto ssDNA (By similarity).</text>
</comment>
<comment type="disruption phenotype">
    <text evidence="2">No visible effect on transformation or growth in the presence or absence of mitomycin C (in strain KA797), on plasmid conjugation (in strain PC4020), on nucleotide excision repair, survival of UV damage or DNA recombination (PubMed:16978360).</text>
</comment>
<comment type="similarity">
    <text evidence="3">Belongs to the DprA/Smf family.</text>
</comment>
<comment type="sequence caution" evidence="3">
    <conflict type="frameshift">
        <sequence resource="EMBL-CDS" id="AAA58082"/>
    </conflict>
</comment>
<comment type="sequence caution" evidence="3">
    <conflict type="frameshift">
        <sequence resource="EMBL-CDS" id="AAA58083"/>
    </conflict>
</comment>
<feature type="chain" id="PRO_0000209157" description="Protein Smf">
    <location>
        <begin position="1"/>
        <end position="374"/>
    </location>
</feature>
<feature type="sequence conflict" description="In Ref. 2; CAA54827." evidence="3" ref="2">
    <original>A</original>
    <variation>R</variation>
    <location>
        <position position="240"/>
    </location>
</feature>
<sequence length="374" mass="40955">MVDTEIWLRLMSISSLYGDDMVRIAHWVAKQSHIDAVVLQQTGLTLRQAQRFLSFPRKSIESSLCWLEQPNHHLIPADSEFYPPQLLATTDYPGALFVEGELHALHSFQLAVVGSRAHSWYGERWGRLFCETLATRGVTITSGLARGIDGVAHKAALQVNGVSIAVLGNGLNTIHPRRHARLAASLLEQGGALVSEFPLDVPPLAYNFPRRNRIISGLSKGVLVVEAALRSGSLVTARCALEQGREVFALPGPIGNPGSEGPHWLIKQGAILVTEPEEILENLQFGLHWLPDAPENSFYSPDQQDVALPFPELLANVGDEVTPVDVVAERAGQPVPEVVTQLLELELAGWIAAVPGGYVRLRRACHVRRTNVFV</sequence>
<protein>
    <recommendedName>
        <fullName>Protein Smf</fullName>
    </recommendedName>
</protein>
<reference key="1">
    <citation type="journal article" date="1993" name="J. Bacteriol.">
        <title>The Escherichia coli fmt gene, encoding methionyl-tRNA(fMet) formyltransferase, escapes metabolic control.</title>
        <authorList>
            <person name="Meinnel T."/>
            <person name="Guillon J.-M."/>
            <person name="Mechulam Y."/>
            <person name="Blanquet S."/>
        </authorList>
    </citation>
    <scope>NUCLEOTIDE SEQUENCE [GENOMIC DNA]</scope>
    <source>
        <strain>K12 / K37</strain>
    </source>
</reference>
<reference key="2">
    <citation type="journal article" date="1994" name="EMBO J.">
        <title>Genetic characterization of polypeptide deformylase, a distinctive enzyme of eubacterial translation.</title>
        <authorList>
            <person name="Mazel D."/>
            <person name="Pochet S."/>
            <person name="Marliere P."/>
        </authorList>
    </citation>
    <scope>NUCLEOTIDE SEQUENCE [GENOMIC DNA]</scope>
    <source>
        <strain>K12</strain>
    </source>
</reference>
<reference key="3">
    <citation type="journal article" date="1997" name="Science">
        <title>The complete genome sequence of Escherichia coli K-12.</title>
        <authorList>
            <person name="Blattner F.R."/>
            <person name="Plunkett G. III"/>
            <person name="Bloch C.A."/>
            <person name="Perna N.T."/>
            <person name="Burland V."/>
            <person name="Riley M."/>
            <person name="Collado-Vides J."/>
            <person name="Glasner J.D."/>
            <person name="Rode C.K."/>
            <person name="Mayhew G.F."/>
            <person name="Gregor J."/>
            <person name="Davis N.W."/>
            <person name="Kirkpatrick H.A."/>
            <person name="Goeden M.A."/>
            <person name="Rose D.J."/>
            <person name="Mau B."/>
            <person name="Shao Y."/>
        </authorList>
    </citation>
    <scope>NUCLEOTIDE SEQUENCE [LARGE SCALE GENOMIC DNA]</scope>
    <source>
        <strain>K12 / MG1655 / ATCC 47076</strain>
    </source>
</reference>
<reference key="4">
    <citation type="journal article" date="2006" name="Nucleic Acids Res.">
        <title>Escherichia coli K-12: a cooperatively developed annotation snapshot -- 2005.</title>
        <authorList>
            <person name="Riley M."/>
            <person name="Abe T."/>
            <person name="Arnaud M.B."/>
            <person name="Berlyn M.K.B."/>
            <person name="Blattner F.R."/>
            <person name="Chaudhuri R.R."/>
            <person name="Glasner J.D."/>
            <person name="Horiuchi T."/>
            <person name="Keseler I.M."/>
            <person name="Kosuge T."/>
            <person name="Mori H."/>
            <person name="Perna N.T."/>
            <person name="Plunkett G. III"/>
            <person name="Rudd K.E."/>
            <person name="Serres M.H."/>
            <person name="Thomas G.H."/>
            <person name="Thomson N.R."/>
            <person name="Wishart D."/>
            <person name="Wanner B.L."/>
        </authorList>
    </citation>
    <scope>SEQUENCE REVISION</scope>
</reference>
<reference key="5">
    <citation type="journal article" date="2006" name="Mol. Syst. Biol.">
        <title>Highly accurate genome sequences of Escherichia coli K-12 strains MG1655 and W3110.</title>
        <authorList>
            <person name="Hayashi K."/>
            <person name="Morooka N."/>
            <person name="Yamamoto Y."/>
            <person name="Fujita K."/>
            <person name="Isono K."/>
            <person name="Choi S."/>
            <person name="Ohtsubo E."/>
            <person name="Baba T."/>
            <person name="Wanner B.L."/>
            <person name="Mori H."/>
            <person name="Horiuchi T."/>
        </authorList>
    </citation>
    <scope>NUCLEOTIDE SEQUENCE [LARGE SCALE GENOMIC DNA]</scope>
    <source>
        <strain>K12 / W3110 / ATCC 27325 / DSM 5911</strain>
    </source>
</reference>
<reference key="6">
    <citation type="journal article" date="2006" name="FEMS Microbiol. Lett.">
        <title>Functional characterization of the competence protein DprA/Smf in Escherichia coli.</title>
        <authorList>
            <person name="Smeets L.C."/>
            <person name="Becker S.C."/>
            <person name="Barcak G.J."/>
            <person name="Vandenbroucke-Grauls C.M."/>
            <person name="Bitter W."/>
            <person name="Goosen N."/>
        </authorList>
    </citation>
    <scope>FUNCTION</scope>
    <scope>DISRUPTION PHENOTYPE</scope>
    <source>
        <strain>K12</strain>
        <strain>KA797</strain>
        <strain>PC4020</strain>
    </source>
</reference>
<evidence type="ECO:0000250" key="1">
    <source>
        <dbReference type="UniProtKB" id="Q8DPI7"/>
    </source>
</evidence>
<evidence type="ECO:0000269" key="2">
    <source>
    </source>
</evidence>
<evidence type="ECO:0000305" key="3"/>